<reference key="1">
    <citation type="journal article" date="2003" name="Mol. Microbiol.">
        <title>Genome-based analysis of virulence genes in a non-biofilm-forming Staphylococcus epidermidis strain (ATCC 12228).</title>
        <authorList>
            <person name="Zhang Y.-Q."/>
            <person name="Ren S.-X."/>
            <person name="Li H.-L."/>
            <person name="Wang Y.-X."/>
            <person name="Fu G."/>
            <person name="Yang J."/>
            <person name="Qin Z.-Q."/>
            <person name="Miao Y.-G."/>
            <person name="Wang W.-Y."/>
            <person name="Chen R.-S."/>
            <person name="Shen Y."/>
            <person name="Chen Z."/>
            <person name="Yuan Z.-H."/>
            <person name="Zhao G.-P."/>
            <person name="Qu D."/>
            <person name="Danchin A."/>
            <person name="Wen Y.-M."/>
        </authorList>
    </citation>
    <scope>NUCLEOTIDE SEQUENCE [LARGE SCALE GENOMIC DNA]</scope>
    <source>
        <strain>ATCC 12228 / FDA PCI 1200</strain>
    </source>
</reference>
<comment type="subcellular location">
    <subcellularLocation>
        <location evidence="5">Cell membrane</location>
        <topology evidence="5">Single-pass membrane protein</topology>
    </subcellularLocation>
</comment>
<comment type="similarity">
    <text evidence="5">Belongs to the peptidase S41A family.</text>
</comment>
<evidence type="ECO:0000250" key="1"/>
<evidence type="ECO:0000255" key="2"/>
<evidence type="ECO:0000255" key="3">
    <source>
        <dbReference type="PROSITE-ProRule" id="PRU00143"/>
    </source>
</evidence>
<evidence type="ECO:0000256" key="4">
    <source>
        <dbReference type="SAM" id="MobiDB-lite"/>
    </source>
</evidence>
<evidence type="ECO:0000305" key="5"/>
<proteinExistence type="inferred from homology"/>
<organism>
    <name type="scientific">Staphylococcus epidermidis (strain ATCC 12228 / FDA PCI 1200)</name>
    <dbReference type="NCBI Taxonomy" id="176280"/>
    <lineage>
        <taxon>Bacteria</taxon>
        <taxon>Bacillati</taxon>
        <taxon>Bacillota</taxon>
        <taxon>Bacilli</taxon>
        <taxon>Bacillales</taxon>
        <taxon>Staphylococcaceae</taxon>
        <taxon>Staphylococcus</taxon>
    </lineage>
</organism>
<gene>
    <name type="ordered locus">SE_1113</name>
</gene>
<name>CTPAL_STAES</name>
<dbReference type="EC" id="3.4.21.-"/>
<dbReference type="EMBL" id="AE015929">
    <property type="protein sequence ID" value="AAO04710.1"/>
    <property type="molecule type" value="Genomic_DNA"/>
</dbReference>
<dbReference type="RefSeq" id="NP_764668.1">
    <property type="nucleotide sequence ID" value="NC_004461.1"/>
</dbReference>
<dbReference type="RefSeq" id="WP_001831212.1">
    <property type="nucleotide sequence ID" value="NZ_WBME01000002.1"/>
</dbReference>
<dbReference type="SMR" id="Q8CSK8"/>
<dbReference type="KEGG" id="sep:SE_1113"/>
<dbReference type="PATRIC" id="fig|176280.10.peg.1086"/>
<dbReference type="eggNOG" id="COG0793">
    <property type="taxonomic scope" value="Bacteria"/>
</dbReference>
<dbReference type="HOGENOM" id="CLU_017295_3_0_9"/>
<dbReference type="OrthoDB" id="9812068at2"/>
<dbReference type="Proteomes" id="UP000001411">
    <property type="component" value="Chromosome"/>
</dbReference>
<dbReference type="GO" id="GO:0030288">
    <property type="term" value="C:outer membrane-bounded periplasmic space"/>
    <property type="evidence" value="ECO:0007669"/>
    <property type="project" value="TreeGrafter"/>
</dbReference>
<dbReference type="GO" id="GO:0005886">
    <property type="term" value="C:plasma membrane"/>
    <property type="evidence" value="ECO:0007669"/>
    <property type="project" value="UniProtKB-SubCell"/>
</dbReference>
<dbReference type="GO" id="GO:0004175">
    <property type="term" value="F:endopeptidase activity"/>
    <property type="evidence" value="ECO:0007669"/>
    <property type="project" value="TreeGrafter"/>
</dbReference>
<dbReference type="GO" id="GO:0008236">
    <property type="term" value="F:serine-type peptidase activity"/>
    <property type="evidence" value="ECO:0007669"/>
    <property type="project" value="UniProtKB-KW"/>
</dbReference>
<dbReference type="GO" id="GO:0006508">
    <property type="term" value="P:proteolysis"/>
    <property type="evidence" value="ECO:0007669"/>
    <property type="project" value="UniProtKB-KW"/>
</dbReference>
<dbReference type="GO" id="GO:0007165">
    <property type="term" value="P:signal transduction"/>
    <property type="evidence" value="ECO:0007669"/>
    <property type="project" value="TreeGrafter"/>
</dbReference>
<dbReference type="CDD" id="cd06782">
    <property type="entry name" value="cpPDZ_CPP-like"/>
    <property type="match status" value="1"/>
</dbReference>
<dbReference type="CDD" id="cd07560">
    <property type="entry name" value="Peptidase_S41_CPP"/>
    <property type="match status" value="1"/>
</dbReference>
<dbReference type="FunFam" id="2.30.42.10:FF:000063">
    <property type="entry name" value="Peptidase, S41 family"/>
    <property type="match status" value="1"/>
</dbReference>
<dbReference type="FunFam" id="3.30.750.44:FF:000001">
    <property type="entry name" value="S41 family peptidase"/>
    <property type="match status" value="1"/>
</dbReference>
<dbReference type="Gene3D" id="2.30.42.10">
    <property type="match status" value="1"/>
</dbReference>
<dbReference type="Gene3D" id="3.30.750.44">
    <property type="match status" value="1"/>
</dbReference>
<dbReference type="Gene3D" id="3.90.226.10">
    <property type="entry name" value="2-enoyl-CoA Hydratase, Chain A, domain 1"/>
    <property type="match status" value="1"/>
</dbReference>
<dbReference type="Gene3D" id="1.10.101.10">
    <property type="entry name" value="PGBD-like superfamily/PGBD"/>
    <property type="match status" value="1"/>
</dbReference>
<dbReference type="InterPro" id="IPR029045">
    <property type="entry name" value="ClpP/crotonase-like_dom_sf"/>
</dbReference>
<dbReference type="InterPro" id="IPR055210">
    <property type="entry name" value="CtpA/B_N"/>
</dbReference>
<dbReference type="InterPro" id="IPR001478">
    <property type="entry name" value="PDZ"/>
</dbReference>
<dbReference type="InterPro" id="IPR041489">
    <property type="entry name" value="PDZ_6"/>
</dbReference>
<dbReference type="InterPro" id="IPR036034">
    <property type="entry name" value="PDZ_sf"/>
</dbReference>
<dbReference type="InterPro" id="IPR004447">
    <property type="entry name" value="Peptidase_S41A"/>
</dbReference>
<dbReference type="InterPro" id="IPR002477">
    <property type="entry name" value="Peptidoglycan-bd-like"/>
</dbReference>
<dbReference type="InterPro" id="IPR036365">
    <property type="entry name" value="PGBD-like_sf"/>
</dbReference>
<dbReference type="InterPro" id="IPR036366">
    <property type="entry name" value="PGBDSf"/>
</dbReference>
<dbReference type="InterPro" id="IPR005151">
    <property type="entry name" value="Tail-specific_protease"/>
</dbReference>
<dbReference type="NCBIfam" id="TIGR00225">
    <property type="entry name" value="prc"/>
    <property type="match status" value="1"/>
</dbReference>
<dbReference type="PANTHER" id="PTHR32060:SF30">
    <property type="entry name" value="CARBOXY-TERMINAL PROCESSING PROTEASE CTPA"/>
    <property type="match status" value="1"/>
</dbReference>
<dbReference type="PANTHER" id="PTHR32060">
    <property type="entry name" value="TAIL-SPECIFIC PROTEASE"/>
    <property type="match status" value="1"/>
</dbReference>
<dbReference type="Pfam" id="PF22694">
    <property type="entry name" value="CtpB_N-like"/>
    <property type="match status" value="1"/>
</dbReference>
<dbReference type="Pfam" id="PF17820">
    <property type="entry name" value="PDZ_6"/>
    <property type="match status" value="1"/>
</dbReference>
<dbReference type="Pfam" id="PF03572">
    <property type="entry name" value="Peptidase_S41"/>
    <property type="match status" value="1"/>
</dbReference>
<dbReference type="Pfam" id="PF01471">
    <property type="entry name" value="PG_binding_1"/>
    <property type="match status" value="1"/>
</dbReference>
<dbReference type="SMART" id="SM00228">
    <property type="entry name" value="PDZ"/>
    <property type="match status" value="1"/>
</dbReference>
<dbReference type="SMART" id="SM00245">
    <property type="entry name" value="TSPc"/>
    <property type="match status" value="1"/>
</dbReference>
<dbReference type="SUPFAM" id="SSF52096">
    <property type="entry name" value="ClpP/crotonase"/>
    <property type="match status" value="1"/>
</dbReference>
<dbReference type="SUPFAM" id="SSF50156">
    <property type="entry name" value="PDZ domain-like"/>
    <property type="match status" value="1"/>
</dbReference>
<dbReference type="SUPFAM" id="SSF47090">
    <property type="entry name" value="PGBD-like"/>
    <property type="match status" value="1"/>
</dbReference>
<dbReference type="PROSITE" id="PS50106">
    <property type="entry name" value="PDZ"/>
    <property type="match status" value="1"/>
</dbReference>
<keyword id="KW-1003">Cell membrane</keyword>
<keyword id="KW-0378">Hydrolase</keyword>
<keyword id="KW-0472">Membrane</keyword>
<keyword id="KW-0645">Protease</keyword>
<keyword id="KW-0720">Serine protease</keyword>
<keyword id="KW-0812">Transmembrane</keyword>
<keyword id="KW-1133">Transmembrane helix</keyword>
<protein>
    <recommendedName>
        <fullName>Probable CtpA-like serine protease</fullName>
        <ecNumber>3.4.21.-</ecNumber>
    </recommendedName>
</protein>
<accession>Q8CSK8</accession>
<sequence>MNDHQKNHATSQDDNTKSTPSKNSKHIKIKLWHFILVILGIILLTSIITVVSTILISHQKSGLNKEQRANLKKIEYVYQTLNKDYYKKQSSDKLTQSAIDGMVKELKDPYSEYMTAEETKQFNEGVSGDFVGIGAEMQKKNEQISVTSPMKDSPAEKAGIQPKDIVTQVNHHSVVGKPLDQVVKMVRGKKGTYVTLTIKRGSQEKDIKIKRDTIHVKSVEYEKKGNVGVLTINKFQSNTSGELKSAIIKAHKQGIRHIILDLRNNPGGLLDEAVKMANIFIDKGNTVVQLEKGKDKEELKTSNQALKQAKDMKVSILVNEGSASASEVFTGAMKDYHKAKVYGSKTFGKGIVQTTREFSDGSLIKYTEMKWLTPDGHYIHGKGIRPDVSISTPKYQSLNVIPDNKTYHQGEKDKNVKTMKIGLKALGYPIDNETNIFDEQLESAIKTFQQDNNLKVNGNFDKKTNDKFTEKLVEKANKKDTVLNDLLNKLK</sequence>
<feature type="chain" id="PRO_0000233196" description="Probable CtpA-like serine protease">
    <location>
        <begin position="1"/>
        <end position="491"/>
    </location>
</feature>
<feature type="transmembrane region" description="Helical" evidence="2">
    <location>
        <begin position="31"/>
        <end position="51"/>
    </location>
</feature>
<feature type="domain" description="PDZ" evidence="3">
    <location>
        <begin position="119"/>
        <end position="201"/>
    </location>
</feature>
<feature type="region of interest" description="Disordered" evidence="4">
    <location>
        <begin position="1"/>
        <end position="22"/>
    </location>
</feature>
<feature type="compositionally biased region" description="Polar residues" evidence="4">
    <location>
        <begin position="8"/>
        <end position="22"/>
    </location>
</feature>
<feature type="active site" description="Charge relay system" evidence="1">
    <location>
        <position position="324"/>
    </location>
</feature>
<feature type="active site" description="Charge relay system" evidence="1">
    <location>
        <position position="335"/>
    </location>
</feature>
<feature type="active site" description="Charge relay system" evidence="1">
    <location>
        <position position="349"/>
    </location>
</feature>